<organism>
    <name type="scientific">Escherichia coli O157:H7 (strain EC4115 / EHEC)</name>
    <dbReference type="NCBI Taxonomy" id="444450"/>
    <lineage>
        <taxon>Bacteria</taxon>
        <taxon>Pseudomonadati</taxon>
        <taxon>Pseudomonadota</taxon>
        <taxon>Gammaproteobacteria</taxon>
        <taxon>Enterobacterales</taxon>
        <taxon>Enterobacteriaceae</taxon>
        <taxon>Escherichia</taxon>
    </lineage>
</organism>
<gene>
    <name evidence="1" type="primary">nusB</name>
    <name type="ordered locus">ECH74115_0498</name>
</gene>
<accession>B5Z3S0</accession>
<proteinExistence type="inferred from homology"/>
<name>NUSB_ECO5E</name>
<dbReference type="EMBL" id="CP001164">
    <property type="protein sequence ID" value="ACI35692.1"/>
    <property type="molecule type" value="Genomic_DNA"/>
</dbReference>
<dbReference type="RefSeq" id="WP_000801125.1">
    <property type="nucleotide sequence ID" value="NC_011353.1"/>
</dbReference>
<dbReference type="SMR" id="B5Z3S0"/>
<dbReference type="GeneID" id="93777044"/>
<dbReference type="KEGG" id="ecf:ECH74115_0498"/>
<dbReference type="HOGENOM" id="CLU_087843_4_1_6"/>
<dbReference type="GO" id="GO:0005829">
    <property type="term" value="C:cytosol"/>
    <property type="evidence" value="ECO:0007669"/>
    <property type="project" value="TreeGrafter"/>
</dbReference>
<dbReference type="GO" id="GO:0003723">
    <property type="term" value="F:RNA binding"/>
    <property type="evidence" value="ECO:0007669"/>
    <property type="project" value="UniProtKB-UniRule"/>
</dbReference>
<dbReference type="GO" id="GO:0006353">
    <property type="term" value="P:DNA-templated transcription termination"/>
    <property type="evidence" value="ECO:0007669"/>
    <property type="project" value="UniProtKB-UniRule"/>
</dbReference>
<dbReference type="GO" id="GO:0031564">
    <property type="term" value="P:transcription antitermination"/>
    <property type="evidence" value="ECO:0007669"/>
    <property type="project" value="UniProtKB-KW"/>
</dbReference>
<dbReference type="CDD" id="cd00619">
    <property type="entry name" value="Terminator_NusB"/>
    <property type="match status" value="1"/>
</dbReference>
<dbReference type="FunFam" id="1.10.940.10:FF:000001">
    <property type="entry name" value="Transcription antitermination factor NusB"/>
    <property type="match status" value="1"/>
</dbReference>
<dbReference type="Gene3D" id="1.10.940.10">
    <property type="entry name" value="NusB-like"/>
    <property type="match status" value="1"/>
</dbReference>
<dbReference type="HAMAP" id="MF_00073">
    <property type="entry name" value="NusB"/>
    <property type="match status" value="1"/>
</dbReference>
<dbReference type="InterPro" id="IPR035926">
    <property type="entry name" value="NusB-like_sf"/>
</dbReference>
<dbReference type="InterPro" id="IPR011605">
    <property type="entry name" value="NusB_fam"/>
</dbReference>
<dbReference type="InterPro" id="IPR006027">
    <property type="entry name" value="NusB_RsmB_TIM44"/>
</dbReference>
<dbReference type="NCBIfam" id="TIGR01951">
    <property type="entry name" value="nusB"/>
    <property type="match status" value="1"/>
</dbReference>
<dbReference type="PANTHER" id="PTHR11078:SF3">
    <property type="entry name" value="ANTITERMINATION NUSB DOMAIN-CONTAINING PROTEIN"/>
    <property type="match status" value="1"/>
</dbReference>
<dbReference type="PANTHER" id="PTHR11078">
    <property type="entry name" value="N UTILIZATION SUBSTANCE PROTEIN B-RELATED"/>
    <property type="match status" value="1"/>
</dbReference>
<dbReference type="Pfam" id="PF01029">
    <property type="entry name" value="NusB"/>
    <property type="match status" value="1"/>
</dbReference>
<dbReference type="SUPFAM" id="SSF48013">
    <property type="entry name" value="NusB-like"/>
    <property type="match status" value="1"/>
</dbReference>
<feature type="chain" id="PRO_1000092549" description="Transcription antitermination protein NusB">
    <location>
        <begin position="1"/>
        <end position="139"/>
    </location>
</feature>
<keyword id="KW-0694">RNA-binding</keyword>
<keyword id="KW-0804">Transcription</keyword>
<keyword id="KW-0889">Transcription antitermination</keyword>
<keyword id="KW-0805">Transcription regulation</keyword>
<comment type="function">
    <text evidence="1">Involved in transcription antitermination. Required for transcription of ribosomal RNA (rRNA) genes. Binds specifically to the boxA antiterminator sequence of the ribosomal RNA (rrn) operons.</text>
</comment>
<comment type="similarity">
    <text evidence="1">Belongs to the NusB family.</text>
</comment>
<protein>
    <recommendedName>
        <fullName evidence="1">Transcription antitermination protein NusB</fullName>
    </recommendedName>
    <alternativeName>
        <fullName evidence="1">Antitermination factor NusB</fullName>
    </alternativeName>
</protein>
<sequence length="139" mass="15689">MKPAARRRARECAVQALYSWQLSQNDIADVEYQFLAEQDVKDVDVLYFRELLAGVATNTAYLDGLMKPYLSRLLEELGQVEKAVLRIALYELSKRSDVPYKVAINEAIELAKSFGAEDSHKFVNGVLDKAAPVIRPNKK</sequence>
<evidence type="ECO:0000255" key="1">
    <source>
        <dbReference type="HAMAP-Rule" id="MF_00073"/>
    </source>
</evidence>
<reference key="1">
    <citation type="journal article" date="2011" name="Proc. Natl. Acad. Sci. U.S.A.">
        <title>Genomic anatomy of Escherichia coli O157:H7 outbreaks.</title>
        <authorList>
            <person name="Eppinger M."/>
            <person name="Mammel M.K."/>
            <person name="Leclerc J.E."/>
            <person name="Ravel J."/>
            <person name="Cebula T.A."/>
        </authorList>
    </citation>
    <scope>NUCLEOTIDE SEQUENCE [LARGE SCALE GENOMIC DNA]</scope>
    <source>
        <strain>EC4115 / EHEC</strain>
    </source>
</reference>